<dbReference type="EC" id="5.3.1.4" evidence="1"/>
<dbReference type="EMBL" id="BA000004">
    <property type="protein sequence ID" value="BAB05592.1"/>
    <property type="molecule type" value="Genomic_DNA"/>
</dbReference>
<dbReference type="PIR" id="A83884">
    <property type="entry name" value="A83884"/>
</dbReference>
<dbReference type="RefSeq" id="WP_010898034.1">
    <property type="nucleotide sequence ID" value="NC_002570.2"/>
</dbReference>
<dbReference type="SMR" id="Q9KBQ2"/>
<dbReference type="STRING" id="272558.gene:10727771"/>
<dbReference type="KEGG" id="bha:BH1873"/>
<dbReference type="eggNOG" id="COG2160">
    <property type="taxonomic scope" value="Bacteria"/>
</dbReference>
<dbReference type="HOGENOM" id="CLU_045663_0_0_9"/>
<dbReference type="OrthoDB" id="9765600at2"/>
<dbReference type="BRENDA" id="5.3.1.4">
    <property type="organism ID" value="661"/>
</dbReference>
<dbReference type="SABIO-RK" id="Q9KBQ2"/>
<dbReference type="UniPathway" id="UPA00145">
    <property type="reaction ID" value="UER00565"/>
</dbReference>
<dbReference type="Proteomes" id="UP000001258">
    <property type="component" value="Chromosome"/>
</dbReference>
<dbReference type="GO" id="GO:0005829">
    <property type="term" value="C:cytosol"/>
    <property type="evidence" value="ECO:0007669"/>
    <property type="project" value="TreeGrafter"/>
</dbReference>
<dbReference type="GO" id="GO:0008733">
    <property type="term" value="F:L-arabinose isomerase activity"/>
    <property type="evidence" value="ECO:0007669"/>
    <property type="project" value="UniProtKB-UniRule"/>
</dbReference>
<dbReference type="GO" id="GO:0030145">
    <property type="term" value="F:manganese ion binding"/>
    <property type="evidence" value="ECO:0007669"/>
    <property type="project" value="UniProtKB-UniRule"/>
</dbReference>
<dbReference type="GO" id="GO:0019569">
    <property type="term" value="P:L-arabinose catabolic process to xylulose 5-phosphate"/>
    <property type="evidence" value="ECO:0007669"/>
    <property type="project" value="UniProtKB-UniRule"/>
</dbReference>
<dbReference type="CDD" id="cd03557">
    <property type="entry name" value="L-arabinose_isomerase"/>
    <property type="match status" value="1"/>
</dbReference>
<dbReference type="Gene3D" id="3.40.50.10940">
    <property type="match status" value="1"/>
</dbReference>
<dbReference type="HAMAP" id="MF_00519">
    <property type="entry name" value="Arabinose_Isome"/>
    <property type="match status" value="1"/>
</dbReference>
<dbReference type="InterPro" id="IPR024664">
    <property type="entry name" value="Ara_Isoase_C"/>
</dbReference>
<dbReference type="InterPro" id="IPR055390">
    <property type="entry name" value="AraA_central"/>
</dbReference>
<dbReference type="InterPro" id="IPR055389">
    <property type="entry name" value="AraA_N"/>
</dbReference>
<dbReference type="InterPro" id="IPR038583">
    <property type="entry name" value="AraA_N_sf"/>
</dbReference>
<dbReference type="InterPro" id="IPR004216">
    <property type="entry name" value="Fuc/Ara_isomerase_C"/>
</dbReference>
<dbReference type="InterPro" id="IPR009015">
    <property type="entry name" value="Fucose_isomerase_N/cen_sf"/>
</dbReference>
<dbReference type="InterPro" id="IPR003762">
    <property type="entry name" value="Lara_isomerase"/>
</dbReference>
<dbReference type="NCBIfam" id="NF002795">
    <property type="entry name" value="PRK02929.1"/>
    <property type="match status" value="1"/>
</dbReference>
<dbReference type="PANTHER" id="PTHR38464">
    <property type="entry name" value="L-ARABINOSE ISOMERASE"/>
    <property type="match status" value="1"/>
</dbReference>
<dbReference type="PANTHER" id="PTHR38464:SF1">
    <property type="entry name" value="L-ARABINOSE ISOMERASE"/>
    <property type="match status" value="1"/>
</dbReference>
<dbReference type="Pfam" id="PF24856">
    <property type="entry name" value="AraA_central"/>
    <property type="match status" value="1"/>
</dbReference>
<dbReference type="Pfam" id="PF02610">
    <property type="entry name" value="AraA_N"/>
    <property type="match status" value="1"/>
</dbReference>
<dbReference type="Pfam" id="PF11762">
    <property type="entry name" value="Arabinose_Iso_C"/>
    <property type="match status" value="1"/>
</dbReference>
<dbReference type="PIRSF" id="PIRSF001478">
    <property type="entry name" value="L-ara_isomerase"/>
    <property type="match status" value="1"/>
</dbReference>
<dbReference type="SUPFAM" id="SSF50443">
    <property type="entry name" value="FucI/AraA C-terminal domain-like"/>
    <property type="match status" value="1"/>
</dbReference>
<dbReference type="SUPFAM" id="SSF53743">
    <property type="entry name" value="FucI/AraA N-terminal and middle domains"/>
    <property type="match status" value="1"/>
</dbReference>
<evidence type="ECO:0000255" key="1">
    <source>
        <dbReference type="HAMAP-Rule" id="MF_00519"/>
    </source>
</evidence>
<organism>
    <name type="scientific">Halalkalibacterium halodurans (strain ATCC BAA-125 / DSM 18197 / FERM 7344 / JCM 9153 / C-125)</name>
    <name type="common">Bacillus halodurans</name>
    <dbReference type="NCBI Taxonomy" id="272558"/>
    <lineage>
        <taxon>Bacteria</taxon>
        <taxon>Bacillati</taxon>
        <taxon>Bacillota</taxon>
        <taxon>Bacilli</taxon>
        <taxon>Bacillales</taxon>
        <taxon>Bacillaceae</taxon>
        <taxon>Halalkalibacterium (ex Joshi et al. 2022)</taxon>
    </lineage>
</organism>
<keyword id="KW-0054">Arabinose catabolism</keyword>
<keyword id="KW-0119">Carbohydrate metabolism</keyword>
<keyword id="KW-0413">Isomerase</keyword>
<keyword id="KW-0464">Manganese</keyword>
<keyword id="KW-0479">Metal-binding</keyword>
<keyword id="KW-1185">Reference proteome</keyword>
<accession>Q9KBQ2</accession>
<comment type="function">
    <text evidence="1">Catalyzes the conversion of L-arabinose to L-ribulose.</text>
</comment>
<comment type="catalytic activity">
    <reaction evidence="1">
        <text>beta-L-arabinopyranose = L-ribulose</text>
        <dbReference type="Rhea" id="RHEA:14821"/>
        <dbReference type="ChEBI" id="CHEBI:16880"/>
        <dbReference type="ChEBI" id="CHEBI:40886"/>
        <dbReference type="EC" id="5.3.1.4"/>
    </reaction>
</comment>
<comment type="cofactor">
    <cofactor evidence="1">
        <name>Mn(2+)</name>
        <dbReference type="ChEBI" id="CHEBI:29035"/>
    </cofactor>
    <text evidence="1">Binds 1 Mn(2+) ion per subunit.</text>
</comment>
<comment type="pathway">
    <text evidence="1">Carbohydrate degradation; L-arabinose degradation via L-ribulose; D-xylulose 5-phosphate from L-arabinose (bacterial route): step 1/3.</text>
</comment>
<comment type="similarity">
    <text evidence="1">Belongs to the arabinose isomerase family.</text>
</comment>
<sequence length="497" mass="56320">MLQTKPYTFWFITGSQHLYGEDAIEQVRQHSQTMVEKLNKIGELPYTIELKEVLTTPDAIRKMVIAANSDDDCAGMITWMHTFSPAKMWINGLKQLKKPLLHLHTQFNREIPYDDIDMDFMNLNQSAHGDREYGHIGARLNISRKVIVGHWQNNDVQERLGAWMRTAAAFVDGHHLKVARFGDNMREVAVTEGDKVEAQIQFGWSITAFGIGDLVEKMKAVSEDEVRRLFDEYQELYRLSPSILEQDEVKAAVLEQAKMELALKEFLEEGGYTAFTTNFEDLHGMKQLPGLAVQRLMAEGYGFGGEGDWKTAALLRMMKIIADGKGTSFMEDYTYHLAEGNELVLGSHMLEICPTIAANQPEIQVHPLGIGGKEDPARLVFDGADGPALNASLIDLGHRFRLVVNEVEAIKPERDMPKLPVAKVLWKCKPSLSEATEAWIHAGGAHHTVFSFEVTPEQLYDWATLADIEVVFINDKTDVLQFQQQLQWNEAFRRLFK</sequence>
<name>ARAA_HALH5</name>
<feature type="chain" id="PRO_0000198379" description="L-arabinose isomerase">
    <location>
        <begin position="1"/>
        <end position="497"/>
    </location>
</feature>
<feature type="binding site" evidence="1">
    <location>
        <position position="306"/>
    </location>
    <ligand>
        <name>Mn(2+)</name>
        <dbReference type="ChEBI" id="CHEBI:29035"/>
    </ligand>
</feature>
<feature type="binding site" evidence="1">
    <location>
        <position position="331"/>
    </location>
    <ligand>
        <name>Mn(2+)</name>
        <dbReference type="ChEBI" id="CHEBI:29035"/>
    </ligand>
</feature>
<feature type="binding site" evidence="1">
    <location>
        <position position="348"/>
    </location>
    <ligand>
        <name>Mn(2+)</name>
        <dbReference type="ChEBI" id="CHEBI:29035"/>
    </ligand>
</feature>
<feature type="binding site" evidence="1">
    <location>
        <position position="447"/>
    </location>
    <ligand>
        <name>Mn(2+)</name>
        <dbReference type="ChEBI" id="CHEBI:29035"/>
    </ligand>
</feature>
<proteinExistence type="inferred from homology"/>
<gene>
    <name evidence="1" type="primary">araA</name>
    <name type="ordered locus">BH1873</name>
</gene>
<reference key="1">
    <citation type="journal article" date="2000" name="Nucleic Acids Res.">
        <title>Complete genome sequence of the alkaliphilic bacterium Bacillus halodurans and genomic sequence comparison with Bacillus subtilis.</title>
        <authorList>
            <person name="Takami H."/>
            <person name="Nakasone K."/>
            <person name="Takaki Y."/>
            <person name="Maeno G."/>
            <person name="Sasaki R."/>
            <person name="Masui N."/>
            <person name="Fuji F."/>
            <person name="Hirama C."/>
            <person name="Nakamura Y."/>
            <person name="Ogasawara N."/>
            <person name="Kuhara S."/>
            <person name="Horikoshi K."/>
        </authorList>
    </citation>
    <scope>NUCLEOTIDE SEQUENCE [LARGE SCALE GENOMIC DNA]</scope>
    <source>
        <strain>ATCC BAA-125 / DSM 18197 / FERM 7344 / JCM 9153 / C-125</strain>
    </source>
</reference>
<protein>
    <recommendedName>
        <fullName evidence="1">L-arabinose isomerase</fullName>
        <ecNumber evidence="1">5.3.1.4</ecNumber>
    </recommendedName>
</protein>